<dbReference type="EMBL" id="BC133600">
    <property type="protein sequence ID" value="AAI33601.1"/>
    <property type="molecule type" value="mRNA"/>
</dbReference>
<dbReference type="RefSeq" id="NP_001075913.1">
    <property type="nucleotide sequence ID" value="NM_001082444.1"/>
</dbReference>
<dbReference type="SMR" id="A2VE70"/>
<dbReference type="BioGRID" id="189801">
    <property type="interactions" value="1"/>
</dbReference>
<dbReference type="FunCoup" id="A2VE70">
    <property type="interactions" value="4337"/>
</dbReference>
<dbReference type="STRING" id="9913.ENSBTAP00000032574"/>
<dbReference type="PaxDb" id="9913-ENSBTAP00000032574"/>
<dbReference type="GeneID" id="533202"/>
<dbReference type="KEGG" id="bta:533202"/>
<dbReference type="CTD" id="55697"/>
<dbReference type="eggNOG" id="KOG0212">
    <property type="taxonomic scope" value="Eukaryota"/>
</dbReference>
<dbReference type="InParanoid" id="A2VE70"/>
<dbReference type="OrthoDB" id="5574975at2759"/>
<dbReference type="Proteomes" id="UP000009136">
    <property type="component" value="Unplaced"/>
</dbReference>
<dbReference type="GO" id="GO:0005783">
    <property type="term" value="C:endoplasmic reticulum"/>
    <property type="evidence" value="ECO:0007669"/>
    <property type="project" value="UniProtKB-KW"/>
</dbReference>
<dbReference type="GO" id="GO:0010008">
    <property type="term" value="C:endosome membrane"/>
    <property type="evidence" value="ECO:0000318"/>
    <property type="project" value="GO_Central"/>
</dbReference>
<dbReference type="GO" id="GO:0070772">
    <property type="term" value="C:PAS complex"/>
    <property type="evidence" value="ECO:0000318"/>
    <property type="project" value="GO_Central"/>
</dbReference>
<dbReference type="GO" id="GO:0006661">
    <property type="term" value="P:phosphatidylinositol biosynthetic process"/>
    <property type="evidence" value="ECO:0000318"/>
    <property type="project" value="GO_Central"/>
</dbReference>
<dbReference type="FunFam" id="1.25.10.10:FF:000631">
    <property type="entry name" value="Vac14, PIKFYVE complex component"/>
    <property type="match status" value="1"/>
</dbReference>
<dbReference type="Gene3D" id="1.25.10.10">
    <property type="entry name" value="Leucine-rich Repeat Variant"/>
    <property type="match status" value="2"/>
</dbReference>
<dbReference type="InterPro" id="IPR011989">
    <property type="entry name" value="ARM-like"/>
</dbReference>
<dbReference type="InterPro" id="IPR016024">
    <property type="entry name" value="ARM-type_fold"/>
</dbReference>
<dbReference type="InterPro" id="IPR026825">
    <property type="entry name" value="Vac14"/>
</dbReference>
<dbReference type="InterPro" id="IPR021841">
    <property type="entry name" value="VAC14_Fig4p-bd"/>
</dbReference>
<dbReference type="PANTHER" id="PTHR16023:SF0">
    <property type="entry name" value="PROTEIN VAC14 HOMOLOG"/>
    <property type="match status" value="1"/>
</dbReference>
<dbReference type="PANTHER" id="PTHR16023">
    <property type="entry name" value="TAX1 BINDING PROTEIN-RELATED"/>
    <property type="match status" value="1"/>
</dbReference>
<dbReference type="Pfam" id="PF12755">
    <property type="entry name" value="Vac14_Fab1_bd"/>
    <property type="match status" value="1"/>
</dbReference>
<dbReference type="Pfam" id="PF11916">
    <property type="entry name" value="Vac14_Fig4_bd"/>
    <property type="match status" value="1"/>
</dbReference>
<dbReference type="SUPFAM" id="SSF48371">
    <property type="entry name" value="ARM repeat"/>
    <property type="match status" value="1"/>
</dbReference>
<name>VAC14_BOVIN</name>
<accession>A2VE70</accession>
<organism>
    <name type="scientific">Bos taurus</name>
    <name type="common">Bovine</name>
    <dbReference type="NCBI Taxonomy" id="9913"/>
    <lineage>
        <taxon>Eukaryota</taxon>
        <taxon>Metazoa</taxon>
        <taxon>Chordata</taxon>
        <taxon>Craniata</taxon>
        <taxon>Vertebrata</taxon>
        <taxon>Euteleostomi</taxon>
        <taxon>Mammalia</taxon>
        <taxon>Eutheria</taxon>
        <taxon>Laurasiatheria</taxon>
        <taxon>Artiodactyla</taxon>
        <taxon>Ruminantia</taxon>
        <taxon>Pecora</taxon>
        <taxon>Bovidae</taxon>
        <taxon>Bovinae</taxon>
        <taxon>Bos</taxon>
    </lineage>
</organism>
<comment type="function">
    <text evidence="2">Scaffold protein component of the PI(3,5)P2 regulatory complex which regulates both the synthesis and turnover of phosphatidylinositol 3,5-bisphosphate (PtdIns(3,5)P2). Pentamerizes into a star-shaped structure and nucleates the assembly of the complex. The pentamer binds a single copy each of PIKFYVE and FIG4 and coordinates both PIKfyve kinase activity and FIG4 phosphatase activity, being required to maintain normal levels of phosphatidylinositol 3-phosphate (PtdIns(3)P) and phosphatidylinositol 5-phosphate (PtdIns(5)P). Plays a role in the biogenesis of endosome carrier vesicles (ECV) / multivesicular bodies (MVB) transport intermediates from early endosomes.</text>
</comment>
<comment type="subunit">
    <text evidence="2">Forms pentamers. Component of the PI(3,5)P2 regulatory complex/PAS complex, at least composed of PIKFYVE, FIG4 and VAC14. VAC14 nucleates the assembly of the complex and serves as a scaffold by pentamerizing into a star-shaped structure, which can bind a single copy each of PIKFYVE and FIG4 and coordinates their activities. Interacts with NOS1.</text>
</comment>
<comment type="subcellular location">
    <subcellularLocation>
        <location evidence="2">Endosome membrane</location>
    </subcellularLocation>
    <subcellularLocation>
        <location evidence="3">Microsome membrane</location>
    </subcellularLocation>
    <text evidence="2">Mainly associated with membranes of the late endocytic pathway.</text>
</comment>
<comment type="domain">
    <text evidence="2">The C-terminal domain (residues 523-782) mediates pentameric interactions and is necessary for the formation and maintenance of the PI(3,5)P2 regulatory complex.</text>
</comment>
<comment type="similarity">
    <text evidence="5">Belongs to the VAC14 family.</text>
</comment>
<reference key="1">
    <citation type="submission" date="2007-02" db="EMBL/GenBank/DDBJ databases">
        <authorList>
            <consortium name="NIH - Mammalian Gene Collection (MGC) project"/>
        </authorList>
    </citation>
    <scope>NUCLEOTIDE SEQUENCE [LARGE SCALE MRNA]</scope>
    <source>
        <strain>Hereford</strain>
        <tissue>Fetal liver</tissue>
    </source>
</reference>
<feature type="chain" id="PRO_0000300484" description="Protein VAC14 homolog">
    <location>
        <begin position="1"/>
        <end position="783"/>
    </location>
</feature>
<feature type="repeat" description="HEAT 1">
    <location>
        <begin position="5"/>
        <end position="42"/>
    </location>
</feature>
<feature type="repeat" description="HEAT 2">
    <location>
        <begin position="89"/>
        <end position="126"/>
    </location>
</feature>
<feature type="repeat" description="HEAT 3">
    <location>
        <begin position="171"/>
        <end position="208"/>
    </location>
</feature>
<feature type="repeat" description="HEAT 4">
    <location>
        <begin position="212"/>
        <end position="249"/>
    </location>
</feature>
<feature type="repeat" description="HEAT 5">
    <location>
        <begin position="439"/>
        <end position="476"/>
    </location>
</feature>
<feature type="repeat" description="HEAT 6">
    <location>
        <begin position="561"/>
        <end position="599"/>
    </location>
</feature>
<feature type="region of interest" description="Disordered" evidence="4">
    <location>
        <begin position="331"/>
        <end position="373"/>
    </location>
</feature>
<feature type="region of interest" description="Mediates interaction with the PDZ domain of NOS1" evidence="1">
    <location>
        <begin position="774"/>
        <end position="778"/>
    </location>
</feature>
<feature type="modified residue" description="N-acetylmethionine" evidence="2">
    <location>
        <position position="1"/>
    </location>
</feature>
<feature type="modified residue" description="Phosphothreonine" evidence="2">
    <location>
        <position position="11"/>
    </location>
</feature>
<feature type="modified residue" description="Phosphoserine" evidence="2">
    <location>
        <position position="518"/>
    </location>
</feature>
<feature type="modified residue" description="Phosphoserine" evidence="2">
    <location>
        <position position="744"/>
    </location>
</feature>
<evidence type="ECO:0000250" key="1"/>
<evidence type="ECO:0000250" key="2">
    <source>
        <dbReference type="UniProtKB" id="Q08AM6"/>
    </source>
</evidence>
<evidence type="ECO:0000250" key="3">
    <source>
        <dbReference type="UniProtKB" id="Q80W92"/>
    </source>
</evidence>
<evidence type="ECO:0000256" key="4">
    <source>
        <dbReference type="SAM" id="MobiDB-lite"/>
    </source>
</evidence>
<evidence type="ECO:0000305" key="5"/>
<protein>
    <recommendedName>
        <fullName>Protein VAC14 homolog</fullName>
    </recommendedName>
</protein>
<keyword id="KW-0007">Acetylation</keyword>
<keyword id="KW-0256">Endoplasmic reticulum</keyword>
<keyword id="KW-0967">Endosome</keyword>
<keyword id="KW-0472">Membrane</keyword>
<keyword id="KW-0492">Microsome</keyword>
<keyword id="KW-0597">Phosphoprotein</keyword>
<keyword id="KW-1185">Reference proteome</keyword>
<keyword id="KW-0677">Repeat</keyword>
<gene>
    <name type="primary">VAC14</name>
</gene>
<proteinExistence type="evidence at transcript level"/>
<sequence length="783" mass="87843">MNPEKDFAPLTPNIVRALNDKLYEKRKVAALEIEKLVREFVAQNNTVQIKHVIQTLSQEFALSQHPHSRKGGLIGLAACSIALGKDSGLYLKELIEPVLTCFNDADSRLRYYACEALYNIVKVARGAVLPHFNVLFDGLSKLAADPDPNVKSGSELLDRLLKDIVTESNKFDLVGFIPLLRERIYSNNQYARQFIISWILVLESVPDINLLDYLPEILDGLFQILGDNGKEIRKMCEVVLGEFLKETKKSPSSVKFAEMANILVIHCQTTDDLIQLTAMCWLREFIQLAGRVMLPYSSGILTAVLPCLAYDDRKRNIKEVASVCNQSLMKLVTPEDDEPDEPRPVVQKQAGPSPEDCAAKQEGAASGGPDGSCDSSFSSGISVFTPASAERAPVTLHLDGIVQVLNCHLSDTAIGMMTRIAVLKWLYHLYIKTPRKMSRHTDSLFPVLLQTLSDESDEVILKDLEVLAEIASSPAGQTDDPGPLDGPDLRVSHSELQAPIPGRAGLLNTPGTKGLECSPSTPTMNSYFYKFMINLLKRFSSERKLLEVRGAFIIRQLCLLLHAESIFHSMADILLREEDLTFASTMVHTLNTILLTSTELFQLRNQLKDLKTPESRNLFCCLYRSWCHKPVTTVSLCFLTQNYRHAYDLIQKFGDLEVTVDFLTEVDKLVQLIECPIFTYLRLQLLDVKSNPYLIKALYGLLMLLPQSSAFQLLSHRLQCVPNPELLQTEDGLKAAPKSQKADSPSIDYAELLQHFERVQKKHLEVRHQRSGRGDHLDRRVVL</sequence>